<evidence type="ECO:0000255" key="1">
    <source>
        <dbReference type="HAMAP-Rule" id="MF_02117"/>
    </source>
</evidence>
<accession>Q2IV18</accession>
<comment type="function">
    <text evidence="1">Is required to sustain N(2)-dependent growth in the presence of low levels of carbon monoxide (CO). Probably acts by protecting the N(2) fixation ability of the nitrogenase complex, which is inactivated in the presence of CO.</text>
</comment>
<comment type="similarity">
    <text evidence="1">Belongs to the CowN family.</text>
</comment>
<keyword id="KW-0535">Nitrogen fixation</keyword>
<keyword id="KW-1185">Reference proteome</keyword>
<gene>
    <name evidence="1" type="primary">cowN</name>
    <name type="ordered locus">RPB_3246</name>
</gene>
<feature type="chain" id="PRO_0000407271" description="N(2)-fixation sustaining protein CowN">
    <location>
        <begin position="1"/>
        <end position="92"/>
    </location>
</feature>
<dbReference type="EMBL" id="CP000250">
    <property type="protein sequence ID" value="ABD07942.1"/>
    <property type="molecule type" value="Genomic_DNA"/>
</dbReference>
<dbReference type="RefSeq" id="WP_011442126.1">
    <property type="nucleotide sequence ID" value="NC_007778.1"/>
</dbReference>
<dbReference type="KEGG" id="rpb:RPB_3246"/>
<dbReference type="eggNOG" id="ENOG5032TZQ">
    <property type="taxonomic scope" value="Bacteria"/>
</dbReference>
<dbReference type="HOGENOM" id="CLU_149349_0_0_5"/>
<dbReference type="OrthoDB" id="7689335at2"/>
<dbReference type="Proteomes" id="UP000008809">
    <property type="component" value="Chromosome"/>
</dbReference>
<dbReference type="GO" id="GO:0009399">
    <property type="term" value="P:nitrogen fixation"/>
    <property type="evidence" value="ECO:0007669"/>
    <property type="project" value="UniProtKB-UniRule"/>
</dbReference>
<dbReference type="HAMAP" id="MF_02117">
    <property type="entry name" value="CowN"/>
    <property type="match status" value="1"/>
</dbReference>
<dbReference type="InterPro" id="IPR024899">
    <property type="entry name" value="CowN"/>
</dbReference>
<dbReference type="NCBIfam" id="NF033689">
    <property type="entry name" value="N2Fix_CO_CowN"/>
    <property type="match status" value="1"/>
</dbReference>
<dbReference type="Pfam" id="PF20543">
    <property type="entry name" value="CowN"/>
    <property type="match status" value="1"/>
</dbReference>
<protein>
    <recommendedName>
        <fullName evidence="1">N(2)-fixation sustaining protein CowN</fullName>
    </recommendedName>
    <alternativeName>
        <fullName evidence="1">CO weal-nitrogenase</fullName>
    </alternativeName>
</protein>
<sequence>MSGSFDRYVSFKNSNWEVRSERVMARLQKHIDAAENPFWAYFAQKRIELREKQGLDDLRVLHNYLPTLRELLEDNGDLETLAMLEELEVTLM</sequence>
<reference key="1">
    <citation type="submission" date="2006-01" db="EMBL/GenBank/DDBJ databases">
        <title>Complete sequence of Rhodopseudomonas palustris HaA2.</title>
        <authorList>
            <consortium name="US DOE Joint Genome Institute"/>
            <person name="Copeland A."/>
            <person name="Lucas S."/>
            <person name="Lapidus A."/>
            <person name="Barry K."/>
            <person name="Detter J.C."/>
            <person name="Glavina T."/>
            <person name="Hammon N."/>
            <person name="Israni S."/>
            <person name="Pitluck S."/>
            <person name="Chain P."/>
            <person name="Malfatti S."/>
            <person name="Shin M."/>
            <person name="Vergez L."/>
            <person name="Schmutz J."/>
            <person name="Larimer F."/>
            <person name="Land M."/>
            <person name="Hauser L."/>
            <person name="Pelletier D.A."/>
            <person name="Kyrpides N."/>
            <person name="Anderson I."/>
            <person name="Oda Y."/>
            <person name="Harwood C.S."/>
            <person name="Richardson P."/>
        </authorList>
    </citation>
    <scope>NUCLEOTIDE SEQUENCE [LARGE SCALE GENOMIC DNA]</scope>
    <source>
        <strain>HaA2</strain>
    </source>
</reference>
<proteinExistence type="inferred from homology"/>
<name>COWN_RHOP2</name>
<organism>
    <name type="scientific">Rhodopseudomonas palustris (strain HaA2)</name>
    <dbReference type="NCBI Taxonomy" id="316058"/>
    <lineage>
        <taxon>Bacteria</taxon>
        <taxon>Pseudomonadati</taxon>
        <taxon>Pseudomonadota</taxon>
        <taxon>Alphaproteobacteria</taxon>
        <taxon>Hyphomicrobiales</taxon>
        <taxon>Nitrobacteraceae</taxon>
        <taxon>Rhodopseudomonas</taxon>
    </lineage>
</organism>